<dbReference type="EC" id="2.7.7.3" evidence="1"/>
<dbReference type="EMBL" id="CP000050">
    <property type="protein sequence ID" value="AAY48788.1"/>
    <property type="molecule type" value="Genomic_DNA"/>
</dbReference>
<dbReference type="RefSeq" id="WP_011037533.1">
    <property type="nucleotide sequence ID" value="NZ_CP155948.1"/>
</dbReference>
<dbReference type="SMR" id="Q4UVY5"/>
<dbReference type="GeneID" id="58013024"/>
<dbReference type="KEGG" id="xcb:XC_1723"/>
<dbReference type="HOGENOM" id="CLU_100149_0_1_6"/>
<dbReference type="UniPathway" id="UPA00241">
    <property type="reaction ID" value="UER00355"/>
</dbReference>
<dbReference type="Proteomes" id="UP000000420">
    <property type="component" value="Chromosome"/>
</dbReference>
<dbReference type="GO" id="GO:0005737">
    <property type="term" value="C:cytoplasm"/>
    <property type="evidence" value="ECO:0007669"/>
    <property type="project" value="UniProtKB-SubCell"/>
</dbReference>
<dbReference type="GO" id="GO:0005524">
    <property type="term" value="F:ATP binding"/>
    <property type="evidence" value="ECO:0007669"/>
    <property type="project" value="UniProtKB-KW"/>
</dbReference>
<dbReference type="GO" id="GO:0004595">
    <property type="term" value="F:pantetheine-phosphate adenylyltransferase activity"/>
    <property type="evidence" value="ECO:0007669"/>
    <property type="project" value="UniProtKB-UniRule"/>
</dbReference>
<dbReference type="GO" id="GO:0015937">
    <property type="term" value="P:coenzyme A biosynthetic process"/>
    <property type="evidence" value="ECO:0007669"/>
    <property type="project" value="UniProtKB-UniRule"/>
</dbReference>
<dbReference type="CDD" id="cd02163">
    <property type="entry name" value="PPAT"/>
    <property type="match status" value="1"/>
</dbReference>
<dbReference type="Gene3D" id="3.40.50.620">
    <property type="entry name" value="HUPs"/>
    <property type="match status" value="1"/>
</dbReference>
<dbReference type="HAMAP" id="MF_00151">
    <property type="entry name" value="PPAT_bact"/>
    <property type="match status" value="1"/>
</dbReference>
<dbReference type="InterPro" id="IPR004821">
    <property type="entry name" value="Cyt_trans-like"/>
</dbReference>
<dbReference type="InterPro" id="IPR001980">
    <property type="entry name" value="PPAT"/>
</dbReference>
<dbReference type="InterPro" id="IPR014729">
    <property type="entry name" value="Rossmann-like_a/b/a_fold"/>
</dbReference>
<dbReference type="NCBIfam" id="TIGR01510">
    <property type="entry name" value="coaD_prev_kdtB"/>
    <property type="match status" value="1"/>
</dbReference>
<dbReference type="NCBIfam" id="TIGR00125">
    <property type="entry name" value="cyt_tran_rel"/>
    <property type="match status" value="1"/>
</dbReference>
<dbReference type="PANTHER" id="PTHR21342">
    <property type="entry name" value="PHOSPHOPANTETHEINE ADENYLYLTRANSFERASE"/>
    <property type="match status" value="1"/>
</dbReference>
<dbReference type="PANTHER" id="PTHR21342:SF1">
    <property type="entry name" value="PHOSPHOPANTETHEINE ADENYLYLTRANSFERASE"/>
    <property type="match status" value="1"/>
</dbReference>
<dbReference type="Pfam" id="PF01467">
    <property type="entry name" value="CTP_transf_like"/>
    <property type="match status" value="1"/>
</dbReference>
<dbReference type="PRINTS" id="PR01020">
    <property type="entry name" value="LPSBIOSNTHSS"/>
</dbReference>
<dbReference type="SUPFAM" id="SSF52374">
    <property type="entry name" value="Nucleotidylyl transferase"/>
    <property type="match status" value="1"/>
</dbReference>
<gene>
    <name evidence="1" type="primary">coaD</name>
    <name type="ordered locus">XC_1723</name>
</gene>
<comment type="function">
    <text evidence="1">Reversibly transfers an adenylyl group from ATP to 4'-phosphopantetheine, yielding dephospho-CoA (dPCoA) and pyrophosphate.</text>
</comment>
<comment type="catalytic activity">
    <reaction evidence="1">
        <text>(R)-4'-phosphopantetheine + ATP + H(+) = 3'-dephospho-CoA + diphosphate</text>
        <dbReference type="Rhea" id="RHEA:19801"/>
        <dbReference type="ChEBI" id="CHEBI:15378"/>
        <dbReference type="ChEBI" id="CHEBI:30616"/>
        <dbReference type="ChEBI" id="CHEBI:33019"/>
        <dbReference type="ChEBI" id="CHEBI:57328"/>
        <dbReference type="ChEBI" id="CHEBI:61723"/>
        <dbReference type="EC" id="2.7.7.3"/>
    </reaction>
</comment>
<comment type="cofactor">
    <cofactor evidence="1">
        <name>Mg(2+)</name>
        <dbReference type="ChEBI" id="CHEBI:18420"/>
    </cofactor>
</comment>
<comment type="pathway">
    <text evidence="1">Cofactor biosynthesis; coenzyme A biosynthesis; CoA from (R)-pantothenate: step 4/5.</text>
</comment>
<comment type="subunit">
    <text evidence="1">Homohexamer.</text>
</comment>
<comment type="subcellular location">
    <subcellularLocation>
        <location evidence="1">Cytoplasm</location>
    </subcellularLocation>
</comment>
<comment type="similarity">
    <text evidence="1">Belongs to the bacterial CoaD family.</text>
</comment>
<feature type="chain" id="PRO_1000011277" description="Phosphopantetheine adenylyltransferase">
    <location>
        <begin position="1"/>
        <end position="168"/>
    </location>
</feature>
<feature type="binding site" evidence="1">
    <location>
        <begin position="14"/>
        <end position="15"/>
    </location>
    <ligand>
        <name>ATP</name>
        <dbReference type="ChEBI" id="CHEBI:30616"/>
    </ligand>
</feature>
<feature type="binding site" evidence="1">
    <location>
        <position position="14"/>
    </location>
    <ligand>
        <name>substrate</name>
    </ligand>
</feature>
<feature type="binding site" evidence="1">
    <location>
        <position position="22"/>
    </location>
    <ligand>
        <name>ATP</name>
        <dbReference type="ChEBI" id="CHEBI:30616"/>
    </ligand>
</feature>
<feature type="binding site" evidence="1">
    <location>
        <position position="46"/>
    </location>
    <ligand>
        <name>substrate</name>
    </ligand>
</feature>
<feature type="binding site" evidence="1">
    <location>
        <position position="78"/>
    </location>
    <ligand>
        <name>substrate</name>
    </ligand>
</feature>
<feature type="binding site" evidence="1">
    <location>
        <position position="92"/>
    </location>
    <ligand>
        <name>substrate</name>
    </ligand>
</feature>
<feature type="binding site" evidence="1">
    <location>
        <begin position="93"/>
        <end position="95"/>
    </location>
    <ligand>
        <name>ATP</name>
        <dbReference type="ChEBI" id="CHEBI:30616"/>
    </ligand>
</feature>
<feature type="binding site" evidence="1">
    <location>
        <position position="103"/>
    </location>
    <ligand>
        <name>ATP</name>
        <dbReference type="ChEBI" id="CHEBI:30616"/>
    </ligand>
</feature>
<feature type="binding site" evidence="1">
    <location>
        <begin position="128"/>
        <end position="134"/>
    </location>
    <ligand>
        <name>ATP</name>
        <dbReference type="ChEBI" id="CHEBI:30616"/>
    </ligand>
</feature>
<feature type="site" description="Transition state stabilizer" evidence="1">
    <location>
        <position position="22"/>
    </location>
</feature>
<organism>
    <name type="scientific">Xanthomonas campestris pv. campestris (strain 8004)</name>
    <dbReference type="NCBI Taxonomy" id="314565"/>
    <lineage>
        <taxon>Bacteria</taxon>
        <taxon>Pseudomonadati</taxon>
        <taxon>Pseudomonadota</taxon>
        <taxon>Gammaproteobacteria</taxon>
        <taxon>Lysobacterales</taxon>
        <taxon>Lysobacteraceae</taxon>
        <taxon>Xanthomonas</taxon>
    </lineage>
</organism>
<accession>Q4UVY5</accession>
<keyword id="KW-0067">ATP-binding</keyword>
<keyword id="KW-0173">Coenzyme A biosynthesis</keyword>
<keyword id="KW-0963">Cytoplasm</keyword>
<keyword id="KW-0460">Magnesium</keyword>
<keyword id="KW-0547">Nucleotide-binding</keyword>
<keyword id="KW-0548">Nucleotidyltransferase</keyword>
<keyword id="KW-0808">Transferase</keyword>
<reference key="1">
    <citation type="journal article" date="2005" name="Genome Res.">
        <title>Comparative and functional genomic analyses of the pathogenicity of phytopathogen Xanthomonas campestris pv. campestris.</title>
        <authorList>
            <person name="Qian W."/>
            <person name="Jia Y."/>
            <person name="Ren S.-X."/>
            <person name="He Y.-Q."/>
            <person name="Feng J.-X."/>
            <person name="Lu L.-F."/>
            <person name="Sun Q."/>
            <person name="Ying G."/>
            <person name="Tang D.-J."/>
            <person name="Tang H."/>
            <person name="Wu W."/>
            <person name="Hao P."/>
            <person name="Wang L."/>
            <person name="Jiang B.-L."/>
            <person name="Zeng S."/>
            <person name="Gu W.-Y."/>
            <person name="Lu G."/>
            <person name="Rong L."/>
            <person name="Tian Y."/>
            <person name="Yao Z."/>
            <person name="Fu G."/>
            <person name="Chen B."/>
            <person name="Fang R."/>
            <person name="Qiang B."/>
            <person name="Chen Z."/>
            <person name="Zhao G.-P."/>
            <person name="Tang J.-L."/>
            <person name="He C."/>
        </authorList>
    </citation>
    <scope>NUCLEOTIDE SEQUENCE [LARGE SCALE GENOMIC DNA]</scope>
    <source>
        <strain>8004</strain>
    </source>
</reference>
<proteinExistence type="inferred from homology"/>
<name>COAD_XANC8</name>
<protein>
    <recommendedName>
        <fullName evidence="1">Phosphopantetheine adenylyltransferase</fullName>
        <ecNumber evidence="1">2.7.7.3</ecNumber>
    </recommendedName>
    <alternativeName>
        <fullName evidence="1">Dephospho-CoA pyrophosphorylase</fullName>
    </alternativeName>
    <alternativeName>
        <fullName evidence="1">Pantetheine-phosphate adenylyltransferase</fullName>
        <shortName evidence="1">PPAT</shortName>
    </alternativeName>
</protein>
<evidence type="ECO:0000255" key="1">
    <source>
        <dbReference type="HAMAP-Rule" id="MF_00151"/>
    </source>
</evidence>
<sequence length="168" mass="18339">MSVANSRTAVYPGTFDPITNGHIDLVNRAAPLFERVVVGVAYSPSKGPALPLERRVELAQEALAAHANVEVRGFDTLLAHFVRDMGAGVLLRGLRAVSDFEYEFQMASMNRHLIPEVETLFLTPAEQYSFISSSLVREIARLGGDVSGFVPASVVDALRQVRESRAQV</sequence>